<feature type="signal peptide" evidence="1">
    <location>
        <begin position="1"/>
        <end position="18"/>
    </location>
</feature>
<feature type="propeptide" id="PRO_0000451004" evidence="4">
    <location>
        <begin position="19"/>
        <end position="29"/>
    </location>
</feature>
<feature type="chain" id="PRO_0000451032" description="Conotoxin Im6.2" evidence="4">
    <location>
        <begin position="30"/>
        <end position="89"/>
    </location>
</feature>
<feature type="modified residue" description="Glutamic acid 1-amide" evidence="4">
    <location>
        <position position="89"/>
    </location>
</feature>
<feature type="disulfide bond" evidence="4">
    <location>
        <begin position="61"/>
        <end position="75"/>
    </location>
</feature>
<feature type="disulfide bond" evidence="4">
    <location>
        <begin position="68"/>
        <end position="79"/>
    </location>
</feature>
<feature type="disulfide bond" evidence="4">
    <location>
        <begin position="74"/>
        <end position="84"/>
    </location>
</feature>
<feature type="sequence conflict" description="In Ref. 2; AGG19141." evidence="4" ref="2">
    <original>M</original>
    <variation>ME</variation>
    <location>
        <position position="1"/>
    </location>
</feature>
<comment type="function">
    <text evidence="4">Probable neurotoxin.</text>
</comment>
<comment type="subcellular location">
    <subcellularLocation>
        <location evidence="2">Secreted</location>
    </subcellularLocation>
</comment>
<comment type="tissue specificity">
    <text evidence="5">Expressed by the venom duct.</text>
</comment>
<comment type="domain">
    <text evidence="4">The presence of a 'disulfide through disulfide knot' structurally defines this protein as a knottin.</text>
</comment>
<comment type="domain">
    <text evidence="4">The cysteine framework is VI/VII (C-C-CC-C-C).</text>
</comment>
<comment type="similarity">
    <text evidence="4">Belongs to the conotoxin O2 superfamily.</text>
</comment>
<sequence length="90" mass="10536">MKLTILLLVAALLVLTQARTERRRVKSRKTSSTYDDEMATFCWSYWNEFQYSYPYTYVQPCLTLGKACTTNSDCCSKYCNTKMCKINWEG</sequence>
<evidence type="ECO:0000255" key="1"/>
<evidence type="ECO:0000269" key="2">
    <source>
    </source>
</evidence>
<evidence type="ECO:0000303" key="3">
    <source>
    </source>
</evidence>
<evidence type="ECO:0000305" key="4"/>
<evidence type="ECO:0000305" key="5">
    <source>
    </source>
</evidence>
<evidence type="ECO:0000312" key="6">
    <source>
        <dbReference type="EMBL" id="AGG19141.1"/>
    </source>
</evidence>
<evidence type="ECO:0000312" key="7">
    <source>
        <dbReference type="EMBL" id="AME17676.1"/>
    </source>
</evidence>
<accession>A0A125S9F2</accession>
<accession>M9PQB5</accession>
<reference key="1">
    <citation type="journal article" date="2019" name="Mar. Drugs">
        <title>Transcriptomic-proteomic correlation in the predation-evoked venom of the cone snail, Conus imperialis.</title>
        <authorList>
            <person name="Jin A.H."/>
            <person name="Dutertre S."/>
            <person name="Dutt M."/>
            <person name="Lavergne V."/>
            <person name="Jones A."/>
            <person name="Lewis R.J."/>
            <person name="Alewood P.F."/>
        </authorList>
    </citation>
    <scope>NUCLEOTIDE SEQUENCE [MRNA]</scope>
    <scope>IDENTIFICATION BY MASS SPECTROMETRY</scope>
    <scope>SUBCELLULAR LOCATION</scope>
    <source>
        <tissue>Venom</tissue>
        <tissue>Venom duct</tissue>
    </source>
</reference>
<reference key="2">
    <citation type="submission" date="2012-04" db="EMBL/GenBank/DDBJ databases">
        <authorList>
            <person name="Wu C."/>
            <person name="Liu Z."/>
            <person name="Dai Q."/>
        </authorList>
    </citation>
    <scope>NUCLEOTIDE SEQUENCE [MRNA]</scope>
</reference>
<organism>
    <name type="scientific">Conus imperialis</name>
    <name type="common">Imperial cone</name>
    <dbReference type="NCBI Taxonomy" id="35631"/>
    <lineage>
        <taxon>Eukaryota</taxon>
        <taxon>Metazoa</taxon>
        <taxon>Spiralia</taxon>
        <taxon>Lophotrochozoa</taxon>
        <taxon>Mollusca</taxon>
        <taxon>Gastropoda</taxon>
        <taxon>Caenogastropoda</taxon>
        <taxon>Neogastropoda</taxon>
        <taxon>Conoidea</taxon>
        <taxon>Conidae</taxon>
        <taxon>Conus</taxon>
        <taxon>Stephanoconus</taxon>
    </lineage>
</organism>
<proteinExistence type="evidence at protein level"/>
<keyword id="KW-0027">Amidation</keyword>
<keyword id="KW-0165">Cleavage on pair of basic residues</keyword>
<keyword id="KW-1015">Disulfide bond</keyword>
<keyword id="KW-0960">Knottin</keyword>
<keyword id="KW-0528">Neurotoxin</keyword>
<keyword id="KW-0964">Secreted</keyword>
<keyword id="KW-0732">Signal</keyword>
<keyword id="KW-0800">Toxin</keyword>
<dbReference type="EMBL" id="KT377412">
    <property type="protein sequence ID" value="AME17676.1"/>
    <property type="molecule type" value="mRNA"/>
</dbReference>
<dbReference type="EMBL" id="JX000439">
    <property type="protein sequence ID" value="AGG19141.1"/>
    <property type="molecule type" value="mRNA"/>
</dbReference>
<dbReference type="SMR" id="A0A125S9F2"/>
<dbReference type="GO" id="GO:0005576">
    <property type="term" value="C:extracellular region"/>
    <property type="evidence" value="ECO:0007669"/>
    <property type="project" value="UniProtKB-SubCell"/>
</dbReference>
<dbReference type="GO" id="GO:0090729">
    <property type="term" value="F:toxin activity"/>
    <property type="evidence" value="ECO:0007669"/>
    <property type="project" value="UniProtKB-KW"/>
</dbReference>
<name>O262_CONIM</name>
<protein>
    <recommendedName>
        <fullName evidence="6">Conotoxin Im6.2</fullName>
    </recommendedName>
    <alternativeName>
        <fullName evidence="3 7">Conopeptide im018</fullName>
    </alternativeName>
</protein>